<gene>
    <name evidence="1" type="primary">argH</name>
    <name type="ordered locus">NMA0847</name>
</gene>
<dbReference type="EC" id="4.3.2.1" evidence="1"/>
<dbReference type="EMBL" id="AL157959">
    <property type="protein sequence ID" value="CAM08084.1"/>
    <property type="molecule type" value="Genomic_DNA"/>
</dbReference>
<dbReference type="PIR" id="C81930">
    <property type="entry name" value="C81930"/>
</dbReference>
<dbReference type="RefSeq" id="WP_002246049.1">
    <property type="nucleotide sequence ID" value="NC_003116.1"/>
</dbReference>
<dbReference type="SMR" id="Q9JVG7"/>
<dbReference type="EnsemblBacteria" id="CAM08084">
    <property type="protein sequence ID" value="CAM08084"/>
    <property type="gene ID" value="NMA0847"/>
</dbReference>
<dbReference type="GeneID" id="93386530"/>
<dbReference type="KEGG" id="nma:NMA0847"/>
<dbReference type="HOGENOM" id="CLU_027272_2_3_4"/>
<dbReference type="UniPathway" id="UPA00068">
    <property type="reaction ID" value="UER00114"/>
</dbReference>
<dbReference type="Proteomes" id="UP000000626">
    <property type="component" value="Chromosome"/>
</dbReference>
<dbReference type="GO" id="GO:0005829">
    <property type="term" value="C:cytosol"/>
    <property type="evidence" value="ECO:0007669"/>
    <property type="project" value="TreeGrafter"/>
</dbReference>
<dbReference type="GO" id="GO:0004056">
    <property type="term" value="F:argininosuccinate lyase activity"/>
    <property type="evidence" value="ECO:0007669"/>
    <property type="project" value="UniProtKB-UniRule"/>
</dbReference>
<dbReference type="GO" id="GO:0042450">
    <property type="term" value="P:arginine biosynthetic process via ornithine"/>
    <property type="evidence" value="ECO:0007669"/>
    <property type="project" value="InterPro"/>
</dbReference>
<dbReference type="GO" id="GO:0006526">
    <property type="term" value="P:L-arginine biosynthetic process"/>
    <property type="evidence" value="ECO:0007669"/>
    <property type="project" value="UniProtKB-UniRule"/>
</dbReference>
<dbReference type="CDD" id="cd01359">
    <property type="entry name" value="Argininosuccinate_lyase"/>
    <property type="match status" value="1"/>
</dbReference>
<dbReference type="FunFam" id="1.10.275.10:FF:000002">
    <property type="entry name" value="Argininosuccinate lyase"/>
    <property type="match status" value="1"/>
</dbReference>
<dbReference type="FunFam" id="1.10.40.30:FF:000001">
    <property type="entry name" value="Argininosuccinate lyase"/>
    <property type="match status" value="1"/>
</dbReference>
<dbReference type="FunFam" id="1.20.200.10:FF:000015">
    <property type="entry name" value="argininosuccinate lyase isoform X2"/>
    <property type="match status" value="1"/>
</dbReference>
<dbReference type="Gene3D" id="1.10.40.30">
    <property type="entry name" value="Fumarase/aspartase (C-terminal domain)"/>
    <property type="match status" value="1"/>
</dbReference>
<dbReference type="Gene3D" id="1.20.200.10">
    <property type="entry name" value="Fumarase/aspartase (Central domain)"/>
    <property type="match status" value="1"/>
</dbReference>
<dbReference type="Gene3D" id="1.10.275.10">
    <property type="entry name" value="Fumarase/aspartase (N-terminal domain)"/>
    <property type="match status" value="1"/>
</dbReference>
<dbReference type="HAMAP" id="MF_00006">
    <property type="entry name" value="Arg_succ_lyase"/>
    <property type="match status" value="1"/>
</dbReference>
<dbReference type="InterPro" id="IPR029419">
    <property type="entry name" value="Arg_succ_lyase_C"/>
</dbReference>
<dbReference type="InterPro" id="IPR009049">
    <property type="entry name" value="Argininosuccinate_lyase"/>
</dbReference>
<dbReference type="InterPro" id="IPR024083">
    <property type="entry name" value="Fumarase/histidase_N"/>
</dbReference>
<dbReference type="InterPro" id="IPR020557">
    <property type="entry name" value="Fumarate_lyase_CS"/>
</dbReference>
<dbReference type="InterPro" id="IPR000362">
    <property type="entry name" value="Fumarate_lyase_fam"/>
</dbReference>
<dbReference type="InterPro" id="IPR022761">
    <property type="entry name" value="Fumarate_lyase_N"/>
</dbReference>
<dbReference type="InterPro" id="IPR008948">
    <property type="entry name" value="L-Aspartase-like"/>
</dbReference>
<dbReference type="NCBIfam" id="TIGR00838">
    <property type="entry name" value="argH"/>
    <property type="match status" value="1"/>
</dbReference>
<dbReference type="PANTHER" id="PTHR43814">
    <property type="entry name" value="ARGININOSUCCINATE LYASE"/>
    <property type="match status" value="1"/>
</dbReference>
<dbReference type="PANTHER" id="PTHR43814:SF1">
    <property type="entry name" value="ARGININOSUCCINATE LYASE"/>
    <property type="match status" value="1"/>
</dbReference>
<dbReference type="Pfam" id="PF14698">
    <property type="entry name" value="ASL_C2"/>
    <property type="match status" value="1"/>
</dbReference>
<dbReference type="Pfam" id="PF00206">
    <property type="entry name" value="Lyase_1"/>
    <property type="match status" value="1"/>
</dbReference>
<dbReference type="PRINTS" id="PR00145">
    <property type="entry name" value="ARGSUCLYASE"/>
</dbReference>
<dbReference type="PRINTS" id="PR00149">
    <property type="entry name" value="FUMRATELYASE"/>
</dbReference>
<dbReference type="SUPFAM" id="SSF48557">
    <property type="entry name" value="L-aspartase-like"/>
    <property type="match status" value="1"/>
</dbReference>
<dbReference type="PROSITE" id="PS00163">
    <property type="entry name" value="FUMARATE_LYASES"/>
    <property type="match status" value="1"/>
</dbReference>
<feature type="chain" id="PRO_0000137794" description="Argininosuccinate lyase">
    <location>
        <begin position="1"/>
        <end position="458"/>
    </location>
</feature>
<organism>
    <name type="scientific">Neisseria meningitidis serogroup A / serotype 4A (strain DSM 15465 / Z2491)</name>
    <dbReference type="NCBI Taxonomy" id="122587"/>
    <lineage>
        <taxon>Bacteria</taxon>
        <taxon>Pseudomonadati</taxon>
        <taxon>Pseudomonadota</taxon>
        <taxon>Betaproteobacteria</taxon>
        <taxon>Neisseriales</taxon>
        <taxon>Neisseriaceae</taxon>
        <taxon>Neisseria</taxon>
    </lineage>
</organism>
<proteinExistence type="inferred from homology"/>
<evidence type="ECO:0000255" key="1">
    <source>
        <dbReference type="HAMAP-Rule" id="MF_00006"/>
    </source>
</evidence>
<sequence>MHDKTWSGRFNEPVSELVKQYTASIGFDRRLAEWDIQGSLAHAQMLKETGVLDEGDLADIRRGMAEILEEIRSGKIEWSSDLEDVHMNIERRLTDKIGDAGKRLHTGRSRNDQVATDIRLWLRDQITVIQSLIQSLQTALLDLAEQNAETVMPGFTHLQVAQPVSFGHHMLAYVEMLGRDNERMADCRRRVNRMPLGAAALAGTTYPIRREITAELLGFEQICQNSLDAVSDRDFAVEFTAAASLIMVHLSRLSEELILWMSPRFGFIDIADRFCTGSSIMPQKKNPDVPELVRGKSGRVIGHLIGLITLMKSQPLAYNKDNQEDKEPLFDTADTLIDTLRIYADMMRGVTVKPDNMRAAVMQGFATATDLADYLVKKGMPFRDAHEVVAQAVRHADEAGVDLSELPLEVLQGFSDLIADDVYGVLTPEGSLNARNHLGGSAPEQVRFQVKRWREMSA</sequence>
<accession>Q9JVG7</accession>
<accession>A1IQQ0</accession>
<reference key="1">
    <citation type="journal article" date="2000" name="Nature">
        <title>Complete DNA sequence of a serogroup A strain of Neisseria meningitidis Z2491.</title>
        <authorList>
            <person name="Parkhill J."/>
            <person name="Achtman M."/>
            <person name="James K.D."/>
            <person name="Bentley S.D."/>
            <person name="Churcher C.M."/>
            <person name="Klee S.R."/>
            <person name="Morelli G."/>
            <person name="Basham D."/>
            <person name="Brown D."/>
            <person name="Chillingworth T."/>
            <person name="Davies R.M."/>
            <person name="Davis P."/>
            <person name="Devlin K."/>
            <person name="Feltwell T."/>
            <person name="Hamlin N."/>
            <person name="Holroyd S."/>
            <person name="Jagels K."/>
            <person name="Leather S."/>
            <person name="Moule S."/>
            <person name="Mungall K.L."/>
            <person name="Quail M.A."/>
            <person name="Rajandream M.A."/>
            <person name="Rutherford K.M."/>
            <person name="Simmonds M."/>
            <person name="Skelton J."/>
            <person name="Whitehead S."/>
            <person name="Spratt B.G."/>
            <person name="Barrell B.G."/>
        </authorList>
    </citation>
    <scope>NUCLEOTIDE SEQUENCE [LARGE SCALE GENOMIC DNA]</scope>
    <source>
        <strain>DSM 15465 / Z2491</strain>
    </source>
</reference>
<comment type="catalytic activity">
    <reaction evidence="1">
        <text>2-(N(omega)-L-arginino)succinate = fumarate + L-arginine</text>
        <dbReference type="Rhea" id="RHEA:24020"/>
        <dbReference type="ChEBI" id="CHEBI:29806"/>
        <dbReference type="ChEBI" id="CHEBI:32682"/>
        <dbReference type="ChEBI" id="CHEBI:57472"/>
        <dbReference type="EC" id="4.3.2.1"/>
    </reaction>
</comment>
<comment type="pathway">
    <text evidence="1">Amino-acid biosynthesis; L-arginine biosynthesis; L-arginine from L-ornithine and carbamoyl phosphate: step 3/3.</text>
</comment>
<comment type="subcellular location">
    <subcellularLocation>
        <location evidence="1">Cytoplasm</location>
    </subcellularLocation>
</comment>
<comment type="similarity">
    <text evidence="1">Belongs to the lyase 1 family. Argininosuccinate lyase subfamily.</text>
</comment>
<protein>
    <recommendedName>
        <fullName evidence="1">Argininosuccinate lyase</fullName>
        <shortName evidence="1">ASAL</shortName>
        <ecNumber evidence="1">4.3.2.1</ecNumber>
    </recommendedName>
    <alternativeName>
        <fullName evidence="1">Arginosuccinase</fullName>
    </alternativeName>
</protein>
<name>ARLY_NEIMA</name>
<keyword id="KW-0028">Amino-acid biosynthesis</keyword>
<keyword id="KW-0055">Arginine biosynthesis</keyword>
<keyword id="KW-0963">Cytoplasm</keyword>
<keyword id="KW-0456">Lyase</keyword>